<proteinExistence type="evidence at protein level"/>
<reference key="1">
    <citation type="journal article" date="1999" name="DNA Res.">
        <title>Complete structure of the chloroplast genome of Arabidopsis thaliana.</title>
        <authorList>
            <person name="Sato S."/>
            <person name="Nakamura Y."/>
            <person name="Kaneko T."/>
            <person name="Asamizu E."/>
            <person name="Tabata S."/>
        </authorList>
    </citation>
    <scope>NUCLEOTIDE SEQUENCE [LARGE SCALE GENOMIC DNA]</scope>
    <source>
        <strain>cv. Columbia</strain>
    </source>
</reference>
<reference key="2">
    <citation type="journal article" date="2009" name="J. Proteomics">
        <title>Phosphoproteomic analysis of nuclei-enriched fractions from Arabidopsis thaliana.</title>
        <authorList>
            <person name="Jones A.M.E."/>
            <person name="MacLean D."/>
            <person name="Studholme D.J."/>
            <person name="Serna-Sanz A."/>
            <person name="Andreasson E."/>
            <person name="Rathjen J.P."/>
            <person name="Peck S.C."/>
        </authorList>
    </citation>
    <scope>IDENTIFICATION BY MASS SPECTROMETRY [LARGE SCALE ANALYSIS]</scope>
    <source>
        <strain>cv. Columbia</strain>
    </source>
</reference>
<reference key="3">
    <citation type="journal article" date="2010" name="Plant Cell">
        <title>The Arabidopsis thylakoid protein PAM68 is required for efficient D1 biogenesis and photosystem II assembly.</title>
        <authorList>
            <person name="Armbruster U."/>
            <person name="Zuhlke J."/>
            <person name="Rengstl B."/>
            <person name="Kreller R."/>
            <person name="Makarenko E."/>
            <person name="Ruhle T."/>
            <person name="Schunemann D."/>
            <person name="Jahns P."/>
            <person name="Weisshaar B."/>
            <person name="Nickelsen J."/>
            <person name="Leister D."/>
        </authorList>
    </citation>
    <scope>INTERACTION WITH PAM68</scope>
    <scope>SUBUNIT</scope>
</reference>
<reference key="4">
    <citation type="journal article" date="2014" name="Plant Cell">
        <title>HYPERSENSITIVE TO HIGH LIGHT1 interacts with LOW QUANTUM YIELD OF PHOTOSYSTEM II1 and functions in protection of photosystem II from photodamage in Arabidopsis.</title>
        <authorList>
            <person name="Jin H."/>
            <person name="Liu B."/>
            <person name="Luo L."/>
            <person name="Feng D."/>
            <person name="Wang P."/>
            <person name="Liu J."/>
            <person name="Da Q."/>
            <person name="He Y."/>
            <person name="Qi K."/>
            <person name="Wang J."/>
            <person name="Wang H.B."/>
        </authorList>
    </citation>
    <scope>INTERACTION WITH HHL1</scope>
</reference>
<geneLocation type="chloroplast"/>
<sequence>MGLPWYRVHTVVLNDPGRLLAVHIMHTALVAGWAGSMALYELAVFDPSDPVLDPMWRQGMFVIPFMTRLGITNSWGGWNITGGTITNPGLWSYEGVAGAHIVFSGLCFLAAIWHWVYWDLEIFCDERTGKPSLDLPKIFGIHLFLSGVACFGFGAFHVTGLYGPGIWVSDPYGLTGKVQPVNPAWGVEGFDPFVPGGIASHHIAAGTLGILAGLFHLSVRPPQRLYKGLRMGNIETVLSSSIAAVFFAAFVVAGTMWYGSATTPIELFGPTRYQWDQGYFQQEIYRRVSAGLAENQSLSEAWAKIPEKLAFYDYIGNNPAKGGLFRAGSMDNGDGIAVGWLGHPVFRNKEGRELFVRRMPTFFETFPVVLVDGDGIVRADVPFRRAESKYSVEQVGVTVEFYGGELNGVSYSDPATVKKYARRAQLGEIFELDRATLKSDGVFRSSPRGWFTFGHASFALLFFFGHIWHGARTLFRDVFAGIDPDLDAQVEFGAFQKLGDPTTKRQAV</sequence>
<evidence type="ECO:0000255" key="1">
    <source>
        <dbReference type="HAMAP-Rule" id="MF_01495"/>
    </source>
</evidence>
<evidence type="ECO:0000269" key="2">
    <source>
    </source>
</evidence>
<evidence type="ECO:0000269" key="3">
    <source>
    </source>
</evidence>
<evidence type="ECO:0007829" key="4">
    <source>
        <dbReference type="PDB" id="7OUI"/>
    </source>
</evidence>
<gene>
    <name evidence="1" type="primary">psbB</name>
    <name type="ordered locus">AtCg00680</name>
</gene>
<keyword id="KW-0002">3D-structure</keyword>
<keyword id="KW-0148">Chlorophyll</keyword>
<keyword id="KW-0150">Chloroplast</keyword>
<keyword id="KW-0157">Chromophore</keyword>
<keyword id="KW-0472">Membrane</keyword>
<keyword id="KW-0602">Photosynthesis</keyword>
<keyword id="KW-0604">Photosystem II</keyword>
<keyword id="KW-0934">Plastid</keyword>
<keyword id="KW-1185">Reference proteome</keyword>
<keyword id="KW-0793">Thylakoid</keyword>
<keyword id="KW-0812">Transmembrane</keyword>
<keyword id="KW-1133">Transmembrane helix</keyword>
<name>PSBB_ARATH</name>
<organism>
    <name type="scientific">Arabidopsis thaliana</name>
    <name type="common">Mouse-ear cress</name>
    <dbReference type="NCBI Taxonomy" id="3702"/>
    <lineage>
        <taxon>Eukaryota</taxon>
        <taxon>Viridiplantae</taxon>
        <taxon>Streptophyta</taxon>
        <taxon>Embryophyta</taxon>
        <taxon>Tracheophyta</taxon>
        <taxon>Spermatophyta</taxon>
        <taxon>Magnoliopsida</taxon>
        <taxon>eudicotyledons</taxon>
        <taxon>Gunneridae</taxon>
        <taxon>Pentapetalae</taxon>
        <taxon>rosids</taxon>
        <taxon>malvids</taxon>
        <taxon>Brassicales</taxon>
        <taxon>Brassicaceae</taxon>
        <taxon>Camelineae</taxon>
        <taxon>Arabidopsis</taxon>
    </lineage>
</organism>
<accession>P56777</accession>
<feature type="chain" id="PRO_0000077476" description="Photosystem II CP47 reaction center protein">
    <location>
        <begin position="1"/>
        <end position="508"/>
    </location>
</feature>
<feature type="transmembrane region" description="Helical" evidence="1">
    <location>
        <begin position="21"/>
        <end position="36"/>
    </location>
</feature>
<feature type="transmembrane region" description="Helical" evidence="1">
    <location>
        <begin position="101"/>
        <end position="115"/>
    </location>
</feature>
<feature type="transmembrane region" description="Helical" evidence="1">
    <location>
        <begin position="140"/>
        <end position="156"/>
    </location>
</feature>
<feature type="transmembrane region" description="Helical" evidence="1">
    <location>
        <begin position="203"/>
        <end position="218"/>
    </location>
</feature>
<feature type="transmembrane region" description="Helical" evidence="1">
    <location>
        <begin position="237"/>
        <end position="252"/>
    </location>
</feature>
<feature type="transmembrane region" description="Helical" evidence="1">
    <location>
        <begin position="457"/>
        <end position="472"/>
    </location>
</feature>
<feature type="turn" evidence="4">
    <location>
        <begin position="5"/>
        <end position="7"/>
    </location>
</feature>
<feature type="helix" evidence="4">
    <location>
        <begin position="8"/>
        <end position="14"/>
    </location>
</feature>
<feature type="helix" evidence="4">
    <location>
        <begin position="16"/>
        <end position="43"/>
    </location>
</feature>
<feature type="strand" evidence="4">
    <location>
        <begin position="50"/>
        <end position="53"/>
    </location>
</feature>
<feature type="helix" evidence="4">
    <location>
        <begin position="56"/>
        <end position="58"/>
    </location>
</feature>
<feature type="helix" evidence="4">
    <location>
        <begin position="62"/>
        <end position="68"/>
    </location>
</feature>
<feature type="strand" evidence="4">
    <location>
        <begin position="77"/>
        <end position="84"/>
    </location>
</feature>
<feature type="strand" evidence="4">
    <location>
        <begin position="90"/>
        <end position="92"/>
    </location>
</feature>
<feature type="helix" evidence="4">
    <location>
        <begin position="93"/>
        <end position="116"/>
    </location>
</feature>
<feature type="helix" evidence="4">
    <location>
        <begin position="121"/>
        <end position="123"/>
    </location>
</feature>
<feature type="turn" evidence="4">
    <location>
        <begin position="126"/>
        <end position="128"/>
    </location>
</feature>
<feature type="helix" evidence="4">
    <location>
        <begin position="135"/>
        <end position="155"/>
    </location>
</feature>
<feature type="turn" evidence="4">
    <location>
        <begin position="156"/>
        <end position="159"/>
    </location>
</feature>
<feature type="strand" evidence="4">
    <location>
        <begin position="166"/>
        <end position="169"/>
    </location>
</feature>
<feature type="strand" evidence="4">
    <location>
        <begin position="173"/>
        <end position="179"/>
    </location>
</feature>
<feature type="helix" evidence="4">
    <location>
        <begin position="188"/>
        <end position="190"/>
    </location>
</feature>
<feature type="helix" evidence="4">
    <location>
        <begin position="195"/>
        <end position="218"/>
    </location>
</feature>
<feature type="helix" evidence="4">
    <location>
        <begin position="223"/>
        <end position="228"/>
    </location>
</feature>
<feature type="turn" evidence="4">
    <location>
        <begin position="229"/>
        <end position="232"/>
    </location>
</feature>
<feature type="helix" evidence="4">
    <location>
        <begin position="234"/>
        <end position="258"/>
    </location>
</feature>
<feature type="helix" evidence="4">
    <location>
        <begin position="265"/>
        <end position="268"/>
    </location>
</feature>
<feature type="helix" evidence="4">
    <location>
        <begin position="273"/>
        <end position="276"/>
    </location>
</feature>
<feature type="helix" evidence="4">
    <location>
        <begin position="279"/>
        <end position="293"/>
    </location>
</feature>
<feature type="helix" evidence="4">
    <location>
        <begin position="298"/>
        <end position="303"/>
    </location>
</feature>
<feature type="helix" evidence="4">
    <location>
        <begin position="307"/>
        <end position="312"/>
    </location>
</feature>
<feature type="helix" evidence="4">
    <location>
        <begin position="315"/>
        <end position="317"/>
    </location>
</feature>
<feature type="strand" evidence="4">
    <location>
        <begin position="321"/>
        <end position="323"/>
    </location>
</feature>
<feature type="helix" evidence="4">
    <location>
        <begin position="331"/>
        <end position="334"/>
    </location>
</feature>
<feature type="strand" evidence="4">
    <location>
        <begin position="343"/>
        <end position="347"/>
    </location>
</feature>
<feature type="strand" evidence="4">
    <location>
        <begin position="349"/>
        <end position="351"/>
    </location>
</feature>
<feature type="strand" evidence="4">
    <location>
        <begin position="353"/>
        <end position="356"/>
    </location>
</feature>
<feature type="strand" evidence="4">
    <location>
        <begin position="369"/>
        <end position="371"/>
    </location>
</feature>
<feature type="helix" evidence="4">
    <location>
        <begin position="392"/>
        <end position="395"/>
    </location>
</feature>
<feature type="strand" evidence="4">
    <location>
        <begin position="398"/>
        <end position="404"/>
    </location>
</feature>
<feature type="turn" evidence="4">
    <location>
        <begin position="405"/>
        <end position="408"/>
    </location>
</feature>
<feature type="helix" evidence="4">
    <location>
        <begin position="414"/>
        <end position="424"/>
    </location>
</feature>
<feature type="helix" evidence="4">
    <location>
        <begin position="434"/>
        <end position="437"/>
    </location>
</feature>
<feature type="helix" evidence="4">
    <location>
        <begin position="447"/>
        <end position="474"/>
    </location>
</feature>
<feature type="helix" evidence="4">
    <location>
        <begin position="476"/>
        <end position="478"/>
    </location>
</feature>
<protein>
    <recommendedName>
        <fullName evidence="1">Photosystem II CP47 reaction center protein</fullName>
    </recommendedName>
    <alternativeName>
        <fullName evidence="1">PSII 47 kDa protein</fullName>
    </alternativeName>
    <alternativeName>
        <fullName evidence="1">Protein CP-47</fullName>
    </alternativeName>
</protein>
<comment type="function">
    <text evidence="1">One of the components of the core complex of photosystem II (PSII). It binds chlorophyll and helps catalyze the primary light-induced photochemical processes of PSII. PSII is a light-driven water:plastoquinone oxidoreductase, using light energy to abstract electrons from H(2)O, generating O(2) and a proton gradient subsequently used for ATP formation.</text>
</comment>
<comment type="cofactor">
    <text evidence="1">Binds multiple chlorophylls. PSII binds additional chlorophylls, carotenoids and specific lipids.</text>
</comment>
<comment type="subunit">
    <text evidence="1 2 3">PSII is composed of 1 copy each of membrane proteins PsbA, PsbB, PsbC, PsbD, PsbE, PsbF, PsbH, PsbI, PsbJ, PsbK, PsbL, PsbM, PsbT, PsbX, PsbY, PsbZ, Psb30/Ycf12, at least 3 peripheral proteins of the oxygen-evolving complex and a large number of cofactors. It forms dimeric complexes (PubMed:20923938). Interacts with PAM68 (PubMed:20923938). Interacts with HHL1 (PubMed:24632535).</text>
</comment>
<comment type="subcellular location">
    <subcellularLocation>
        <location evidence="1">Plastid</location>
        <location evidence="1">Chloroplast thylakoid membrane</location>
        <topology evidence="1">Multi-pass membrane protein</topology>
    </subcellularLocation>
</comment>
<comment type="similarity">
    <text evidence="1">Belongs to the PsbB/PsbC family. PsbB subfamily.</text>
</comment>
<dbReference type="EMBL" id="AP000423">
    <property type="protein sequence ID" value="BAA84411.1"/>
    <property type="molecule type" value="Genomic_DNA"/>
</dbReference>
<dbReference type="RefSeq" id="NP_051084.1">
    <property type="nucleotide sequence ID" value="NC_000932.1"/>
</dbReference>
<dbReference type="PDB" id="5MDX">
    <property type="method" value="EM"/>
    <property type="resolution" value="5.30 A"/>
    <property type="chains" value="B/b=2-508"/>
</dbReference>
<dbReference type="PDB" id="7OUI">
    <property type="method" value="EM"/>
    <property type="resolution" value="2.79 A"/>
    <property type="chains" value="B/b=1-508"/>
</dbReference>
<dbReference type="PDBsum" id="5MDX"/>
<dbReference type="PDBsum" id="7OUI"/>
<dbReference type="EMDB" id="EMD-13078"/>
<dbReference type="EMDB" id="EMD-3491"/>
<dbReference type="SMR" id="P56777"/>
<dbReference type="BioGRID" id="29939">
    <property type="interactions" value="51"/>
</dbReference>
<dbReference type="FunCoup" id="P56777">
    <property type="interactions" value="329"/>
</dbReference>
<dbReference type="IntAct" id="P56777">
    <property type="interactions" value="1"/>
</dbReference>
<dbReference type="STRING" id="3702.P56777"/>
<dbReference type="TCDB" id="3.E.2.2.3">
    <property type="family name" value="the photosynthetic reaction center (prc) family"/>
</dbReference>
<dbReference type="iPTMnet" id="P56777"/>
<dbReference type="PaxDb" id="3702-ATCG00680.1"/>
<dbReference type="ProteomicsDB" id="226310"/>
<dbReference type="EnsemblPlants" id="ATCG00680.1">
    <property type="protein sequence ID" value="ATCG00680.1"/>
    <property type="gene ID" value="ATCG00680"/>
</dbReference>
<dbReference type="GeneID" id="844733"/>
<dbReference type="Gramene" id="ATCG00680.1">
    <property type="protein sequence ID" value="ATCG00680.1"/>
    <property type="gene ID" value="ATCG00680"/>
</dbReference>
<dbReference type="KEGG" id="ath:ArthCp049"/>
<dbReference type="Araport" id="ATCG00680"/>
<dbReference type="TAIR" id="ATCG00680">
    <property type="gene designation" value="PSBB"/>
</dbReference>
<dbReference type="eggNOG" id="ENOG502QRV6">
    <property type="taxonomic scope" value="Eukaryota"/>
</dbReference>
<dbReference type="HOGENOM" id="CLU_028227_2_0_1"/>
<dbReference type="InParanoid" id="P56777"/>
<dbReference type="OMA" id="MLAAIWH"/>
<dbReference type="BioCyc" id="MetaCyc:ATCG00680-MONOMER"/>
<dbReference type="PRO" id="PR:P56777"/>
<dbReference type="Proteomes" id="UP000006548">
    <property type="component" value="Chloroplast Pltd"/>
</dbReference>
<dbReference type="ExpressionAtlas" id="P56777">
    <property type="expression patterns" value="baseline and differential"/>
</dbReference>
<dbReference type="GO" id="GO:0009507">
    <property type="term" value="C:chloroplast"/>
    <property type="evidence" value="ECO:0007005"/>
    <property type="project" value="TAIR"/>
</dbReference>
<dbReference type="GO" id="GO:0009534">
    <property type="term" value="C:chloroplast thylakoid"/>
    <property type="evidence" value="ECO:0007005"/>
    <property type="project" value="TAIR"/>
</dbReference>
<dbReference type="GO" id="GO:0009535">
    <property type="term" value="C:chloroplast thylakoid membrane"/>
    <property type="evidence" value="ECO:0007005"/>
    <property type="project" value="TAIR"/>
</dbReference>
<dbReference type="GO" id="GO:0009523">
    <property type="term" value="C:photosystem II"/>
    <property type="evidence" value="ECO:0007669"/>
    <property type="project" value="UniProtKB-KW"/>
</dbReference>
<dbReference type="GO" id="GO:0009536">
    <property type="term" value="C:plastid"/>
    <property type="evidence" value="ECO:0007005"/>
    <property type="project" value="TAIR"/>
</dbReference>
<dbReference type="GO" id="GO:0009579">
    <property type="term" value="C:thylakoid"/>
    <property type="evidence" value="ECO:0007005"/>
    <property type="project" value="TAIR"/>
</dbReference>
<dbReference type="GO" id="GO:0016168">
    <property type="term" value="F:chlorophyll binding"/>
    <property type="evidence" value="ECO:0007669"/>
    <property type="project" value="UniProtKB-UniRule"/>
</dbReference>
<dbReference type="GO" id="GO:0045156">
    <property type="term" value="F:electron transporter, transferring electrons within the cyclic electron transport pathway of photosynthesis activity"/>
    <property type="evidence" value="ECO:0007669"/>
    <property type="project" value="InterPro"/>
</dbReference>
<dbReference type="GO" id="GO:0003729">
    <property type="term" value="F:mRNA binding"/>
    <property type="evidence" value="ECO:0000314"/>
    <property type="project" value="TAIR"/>
</dbReference>
<dbReference type="GO" id="GO:0009772">
    <property type="term" value="P:photosynthetic electron transport in photosystem II"/>
    <property type="evidence" value="ECO:0007669"/>
    <property type="project" value="InterPro"/>
</dbReference>
<dbReference type="GO" id="GO:0010207">
    <property type="term" value="P:photosystem II assembly"/>
    <property type="evidence" value="ECO:0000315"/>
    <property type="project" value="TAIR"/>
</dbReference>
<dbReference type="DisProt" id="DP02576"/>
<dbReference type="FunFam" id="3.10.680.10:FF:000001">
    <property type="entry name" value="Photosystem II CP47 reaction center protein"/>
    <property type="match status" value="1"/>
</dbReference>
<dbReference type="Gene3D" id="3.10.680.10">
    <property type="entry name" value="Photosystem II CP47 reaction center protein"/>
    <property type="match status" value="1"/>
</dbReference>
<dbReference type="HAMAP" id="MF_01495">
    <property type="entry name" value="PSII_PsbB_CP47"/>
    <property type="match status" value="1"/>
</dbReference>
<dbReference type="InterPro" id="IPR000932">
    <property type="entry name" value="PS_antenna-like"/>
</dbReference>
<dbReference type="InterPro" id="IPR036001">
    <property type="entry name" value="PS_II_antenna-like_sf"/>
</dbReference>
<dbReference type="InterPro" id="IPR017486">
    <property type="entry name" value="PSII_PsbB"/>
</dbReference>
<dbReference type="NCBIfam" id="TIGR03039">
    <property type="entry name" value="PS_II_CP47"/>
    <property type="match status" value="1"/>
</dbReference>
<dbReference type="PANTHER" id="PTHR33180">
    <property type="entry name" value="PHOTOSYSTEM II CP43 REACTION CENTER PROTEIN"/>
    <property type="match status" value="1"/>
</dbReference>
<dbReference type="PANTHER" id="PTHR33180:SF38">
    <property type="entry name" value="PHOTOSYSTEM II CP47 REACTION CENTER PROTEIN"/>
    <property type="match status" value="1"/>
</dbReference>
<dbReference type="Pfam" id="PF00421">
    <property type="entry name" value="PSII"/>
    <property type="match status" value="1"/>
</dbReference>
<dbReference type="SUPFAM" id="SSF161077">
    <property type="entry name" value="Photosystem II antenna protein-like"/>
    <property type="match status" value="1"/>
</dbReference>